<accession>O70435</accession>
<dbReference type="EMBL" id="AF055983">
    <property type="protein sequence ID" value="AAC12943.1"/>
    <property type="molecule type" value="mRNA"/>
</dbReference>
<dbReference type="EMBL" id="AF060089">
    <property type="protein sequence ID" value="AAD50534.1"/>
    <property type="molecule type" value="mRNA"/>
</dbReference>
<dbReference type="CCDS" id="CCDS25961.1"/>
<dbReference type="RefSeq" id="NP_001409967.1">
    <property type="nucleotide sequence ID" value="NM_001423038.1"/>
</dbReference>
<dbReference type="RefSeq" id="NP_001409974.1">
    <property type="nucleotide sequence ID" value="NM_001423045.1"/>
</dbReference>
<dbReference type="RefSeq" id="NP_035314.3">
    <property type="nucleotide sequence ID" value="NM_011184.5"/>
</dbReference>
<dbReference type="RefSeq" id="XP_017170485.1">
    <property type="nucleotide sequence ID" value="XM_017314996.1"/>
</dbReference>
<dbReference type="PDB" id="3UNB">
    <property type="method" value="X-ray"/>
    <property type="resolution" value="2.90 A"/>
    <property type="chains" value="F/T/h/v=1-255"/>
</dbReference>
<dbReference type="PDB" id="3UNE">
    <property type="method" value="X-ray"/>
    <property type="resolution" value="3.20 A"/>
    <property type="chains" value="F/T/h/v=1-255"/>
</dbReference>
<dbReference type="PDB" id="3UNF">
    <property type="method" value="X-ray"/>
    <property type="resolution" value="2.90 A"/>
    <property type="chains" value="F/T=1-255"/>
</dbReference>
<dbReference type="PDB" id="3UNH">
    <property type="method" value="X-ray"/>
    <property type="resolution" value="3.20 A"/>
    <property type="chains" value="F/T=1-255"/>
</dbReference>
<dbReference type="PDB" id="8YPK">
    <property type="method" value="EM"/>
    <property type="resolution" value="2.70 A"/>
    <property type="chains" value="J/Q=1-255"/>
</dbReference>
<dbReference type="PDB" id="8YVP">
    <property type="method" value="EM"/>
    <property type="resolution" value="2.50 A"/>
    <property type="chains" value="J/Q=1-255"/>
</dbReference>
<dbReference type="PDBsum" id="3UNB"/>
<dbReference type="PDBsum" id="3UNE"/>
<dbReference type="PDBsum" id="3UNF"/>
<dbReference type="PDBsum" id="3UNH"/>
<dbReference type="PDBsum" id="8YPK"/>
<dbReference type="PDBsum" id="8YVP"/>
<dbReference type="EMDB" id="EMD-39482"/>
<dbReference type="EMDB" id="EMD-39612"/>
<dbReference type="SMR" id="O70435"/>
<dbReference type="BioGRID" id="202417">
    <property type="interactions" value="70"/>
</dbReference>
<dbReference type="CORUM" id="O70435"/>
<dbReference type="FunCoup" id="O70435">
    <property type="interactions" value="3094"/>
</dbReference>
<dbReference type="IntAct" id="O70435">
    <property type="interactions" value="10"/>
</dbReference>
<dbReference type="STRING" id="10090.ENSMUSP00000125548"/>
<dbReference type="GlyGen" id="O70435">
    <property type="glycosylation" value="2 sites, 1 N-linked glycan (1 site), 1 O-linked glycan (1 site)"/>
</dbReference>
<dbReference type="iPTMnet" id="O70435"/>
<dbReference type="PhosphoSitePlus" id="O70435"/>
<dbReference type="SwissPalm" id="O70435"/>
<dbReference type="jPOST" id="O70435"/>
<dbReference type="PaxDb" id="10090-ENSMUSP00000125548"/>
<dbReference type="PeptideAtlas" id="O70435"/>
<dbReference type="ProteomicsDB" id="291911"/>
<dbReference type="Pumba" id="O70435"/>
<dbReference type="Antibodypedia" id="80">
    <property type="antibodies" value="307 antibodies from 35 providers"/>
</dbReference>
<dbReference type="DNASU" id="19167"/>
<dbReference type="Ensembl" id="ENSMUST00000160027.8">
    <property type="protein sequence ID" value="ENSMUSP00000125548.2"/>
    <property type="gene ID" value="ENSMUSG00000060073.10"/>
</dbReference>
<dbReference type="GeneID" id="19167"/>
<dbReference type="KEGG" id="mmu:19167"/>
<dbReference type="UCSC" id="uc007ntz.2">
    <property type="organism name" value="mouse"/>
</dbReference>
<dbReference type="AGR" id="MGI:104883"/>
<dbReference type="CTD" id="5684"/>
<dbReference type="MGI" id="MGI:104883">
    <property type="gene designation" value="Psma3"/>
</dbReference>
<dbReference type="VEuPathDB" id="HostDB:ENSMUSG00000060073"/>
<dbReference type="eggNOG" id="KOG0184">
    <property type="taxonomic scope" value="Eukaryota"/>
</dbReference>
<dbReference type="GeneTree" id="ENSGT00550000074912"/>
<dbReference type="HOGENOM" id="CLU_035750_0_0_1"/>
<dbReference type="InParanoid" id="O70435"/>
<dbReference type="OMA" id="RVSMYMH"/>
<dbReference type="OrthoDB" id="40134at2759"/>
<dbReference type="PhylomeDB" id="O70435"/>
<dbReference type="TreeFam" id="TF106208"/>
<dbReference type="Reactome" id="R-MMU-1169091">
    <property type="pathway name" value="Activation of NF-kappaB in B cells"/>
</dbReference>
<dbReference type="Reactome" id="R-MMU-1234176">
    <property type="pathway name" value="Oxygen-dependent proline hydroxylation of Hypoxia-inducible Factor Alpha"/>
</dbReference>
<dbReference type="Reactome" id="R-MMU-1236978">
    <property type="pathway name" value="Cross-presentation of soluble exogenous antigens (endosomes)"/>
</dbReference>
<dbReference type="Reactome" id="R-MMU-174084">
    <property type="pathway name" value="Autodegradation of Cdh1 by Cdh1:APC/C"/>
</dbReference>
<dbReference type="Reactome" id="R-MMU-174154">
    <property type="pathway name" value="APC/C:Cdc20 mediated degradation of Securin"/>
</dbReference>
<dbReference type="Reactome" id="R-MMU-174178">
    <property type="pathway name" value="APC/C:Cdh1 mediated degradation of Cdc20 and other APC/C:Cdh1 targeted proteins in late mitosis/early G1"/>
</dbReference>
<dbReference type="Reactome" id="R-MMU-174184">
    <property type="pathway name" value="Cdc20:Phospho-APC/C mediated degradation of Cyclin A"/>
</dbReference>
<dbReference type="Reactome" id="R-MMU-187577">
    <property type="pathway name" value="SCF(Skp2)-mediated degradation of p27/p21"/>
</dbReference>
<dbReference type="Reactome" id="R-MMU-195253">
    <property type="pathway name" value="Degradation of beta-catenin by the destruction complex"/>
</dbReference>
<dbReference type="Reactome" id="R-MMU-202424">
    <property type="pathway name" value="Downstream TCR signaling"/>
</dbReference>
<dbReference type="Reactome" id="R-MMU-2467813">
    <property type="pathway name" value="Separation of Sister Chromatids"/>
</dbReference>
<dbReference type="Reactome" id="R-MMU-2871837">
    <property type="pathway name" value="FCERI mediated NF-kB activation"/>
</dbReference>
<dbReference type="Reactome" id="R-MMU-349425">
    <property type="pathway name" value="Autodegradation of the E3 ubiquitin ligase COP1"/>
</dbReference>
<dbReference type="Reactome" id="R-MMU-350562">
    <property type="pathway name" value="Regulation of ornithine decarboxylase (ODC)"/>
</dbReference>
<dbReference type="Reactome" id="R-MMU-382556">
    <property type="pathway name" value="ABC-family proteins mediated transport"/>
</dbReference>
<dbReference type="Reactome" id="R-MMU-450408">
    <property type="pathway name" value="AUF1 (hnRNP D0) binds and destabilizes mRNA"/>
</dbReference>
<dbReference type="Reactome" id="R-MMU-4608870">
    <property type="pathway name" value="Asymmetric localization of PCP proteins"/>
</dbReference>
<dbReference type="Reactome" id="R-MMU-4641257">
    <property type="pathway name" value="Degradation of AXIN"/>
</dbReference>
<dbReference type="Reactome" id="R-MMU-4641258">
    <property type="pathway name" value="Degradation of DVL"/>
</dbReference>
<dbReference type="Reactome" id="R-MMU-5358346">
    <property type="pathway name" value="Hedgehog ligand biogenesis"/>
</dbReference>
<dbReference type="Reactome" id="R-MMU-5607761">
    <property type="pathway name" value="Dectin-1 mediated noncanonical NF-kB signaling"/>
</dbReference>
<dbReference type="Reactome" id="R-MMU-5607764">
    <property type="pathway name" value="CLEC7A (Dectin-1) signaling"/>
</dbReference>
<dbReference type="Reactome" id="R-MMU-5610780">
    <property type="pathway name" value="Degradation of GLI1 by the proteasome"/>
</dbReference>
<dbReference type="Reactome" id="R-MMU-5610785">
    <property type="pathway name" value="GLI3 is processed to GLI3R by the proteasome"/>
</dbReference>
<dbReference type="Reactome" id="R-MMU-5632684">
    <property type="pathway name" value="Hedgehog 'on' state"/>
</dbReference>
<dbReference type="Reactome" id="R-MMU-5658442">
    <property type="pathway name" value="Regulation of RAS by GAPs"/>
</dbReference>
<dbReference type="Reactome" id="R-MMU-5668541">
    <property type="pathway name" value="TNFR2 non-canonical NF-kB pathway"/>
</dbReference>
<dbReference type="Reactome" id="R-MMU-5676590">
    <property type="pathway name" value="NIK--&gt;noncanonical NF-kB signaling"/>
</dbReference>
<dbReference type="Reactome" id="R-MMU-5687128">
    <property type="pathway name" value="MAPK6/MAPK4 signaling"/>
</dbReference>
<dbReference type="Reactome" id="R-MMU-5689603">
    <property type="pathway name" value="UCH proteinases"/>
</dbReference>
<dbReference type="Reactome" id="R-MMU-5689880">
    <property type="pathway name" value="Ub-specific processing proteases"/>
</dbReference>
<dbReference type="Reactome" id="R-MMU-68867">
    <property type="pathway name" value="Assembly of the pre-replicative complex"/>
</dbReference>
<dbReference type="Reactome" id="R-MMU-68949">
    <property type="pathway name" value="Orc1 removal from chromatin"/>
</dbReference>
<dbReference type="Reactome" id="R-MMU-69017">
    <property type="pathway name" value="CDK-mediated phosphorylation and removal of Cdc6"/>
</dbReference>
<dbReference type="Reactome" id="R-MMU-69481">
    <property type="pathway name" value="G2/M Checkpoints"/>
</dbReference>
<dbReference type="Reactome" id="R-MMU-69601">
    <property type="pathway name" value="Ubiquitin Mediated Degradation of Phosphorylated Cdc25A"/>
</dbReference>
<dbReference type="Reactome" id="R-MMU-75815">
    <property type="pathway name" value="Ubiquitin-dependent degradation of Cyclin D"/>
</dbReference>
<dbReference type="Reactome" id="R-MMU-8852276">
    <property type="pathway name" value="The role of GTSE1 in G2/M progression after G2 checkpoint"/>
</dbReference>
<dbReference type="Reactome" id="R-MMU-8854050">
    <property type="pathway name" value="FBXL7 down-regulates AURKA during mitotic entry and in early mitosis"/>
</dbReference>
<dbReference type="Reactome" id="R-MMU-8939236">
    <property type="pathway name" value="RUNX1 regulates transcription of genes involved in differentiation of HSCs"/>
</dbReference>
<dbReference type="Reactome" id="R-MMU-8939902">
    <property type="pathway name" value="Regulation of RUNX2 expression and activity"/>
</dbReference>
<dbReference type="Reactome" id="R-MMU-8941858">
    <property type="pathway name" value="Regulation of RUNX3 expression and activity"/>
</dbReference>
<dbReference type="Reactome" id="R-MMU-8948751">
    <property type="pathway name" value="Regulation of PTEN stability and activity"/>
</dbReference>
<dbReference type="Reactome" id="R-MMU-8951664">
    <property type="pathway name" value="Neddylation"/>
</dbReference>
<dbReference type="Reactome" id="R-MMU-9020702">
    <property type="pathway name" value="Interleukin-1 signaling"/>
</dbReference>
<dbReference type="Reactome" id="R-MMU-9755511">
    <property type="pathway name" value="KEAP1-NFE2L2 pathway"/>
</dbReference>
<dbReference type="Reactome" id="R-MMU-9762114">
    <property type="pathway name" value="GSK3B and BTRC:CUL1-mediated-degradation of NFE2L2"/>
</dbReference>
<dbReference type="Reactome" id="R-MMU-983168">
    <property type="pathway name" value="Antigen processing: Ubiquitination &amp; Proteasome degradation"/>
</dbReference>
<dbReference type="Reactome" id="R-MMU-9907900">
    <property type="pathway name" value="Proteasome assembly"/>
</dbReference>
<dbReference type="BioGRID-ORCS" id="19167">
    <property type="hits" value="31 hits in 77 CRISPR screens"/>
</dbReference>
<dbReference type="ChiTaRS" id="Psma3">
    <property type="organism name" value="mouse"/>
</dbReference>
<dbReference type="EvolutionaryTrace" id="O70435"/>
<dbReference type="PRO" id="PR:O70435"/>
<dbReference type="Proteomes" id="UP000000589">
    <property type="component" value="Chromosome 12"/>
</dbReference>
<dbReference type="RNAct" id="O70435">
    <property type="molecule type" value="protein"/>
</dbReference>
<dbReference type="Bgee" id="ENSMUSG00000060073">
    <property type="expression patterns" value="Expressed in right kidney and 204 other cell types or tissues"/>
</dbReference>
<dbReference type="ExpressionAtlas" id="O70435">
    <property type="expression patterns" value="baseline and differential"/>
</dbReference>
<dbReference type="GO" id="GO:0005829">
    <property type="term" value="C:cytosol"/>
    <property type="evidence" value="ECO:0000304"/>
    <property type="project" value="Reactome"/>
</dbReference>
<dbReference type="GO" id="GO:0005654">
    <property type="term" value="C:nucleoplasm"/>
    <property type="evidence" value="ECO:0000304"/>
    <property type="project" value="Reactome"/>
</dbReference>
<dbReference type="GO" id="GO:0005839">
    <property type="term" value="C:proteasome core complex"/>
    <property type="evidence" value="ECO:0000314"/>
    <property type="project" value="UniProtKB"/>
</dbReference>
<dbReference type="GO" id="GO:0019773">
    <property type="term" value="C:proteasome core complex, alpha-subunit complex"/>
    <property type="evidence" value="ECO:0000250"/>
    <property type="project" value="UniProtKB"/>
</dbReference>
<dbReference type="GO" id="GO:0031625">
    <property type="term" value="F:ubiquitin protein ligase binding"/>
    <property type="evidence" value="ECO:0007669"/>
    <property type="project" value="Ensembl"/>
</dbReference>
<dbReference type="GO" id="GO:0043161">
    <property type="term" value="P:proteasome-mediated ubiquitin-dependent protein catabolic process"/>
    <property type="evidence" value="ECO:0007669"/>
    <property type="project" value="Ensembl"/>
</dbReference>
<dbReference type="CDD" id="cd03751">
    <property type="entry name" value="proteasome_alpha_type_3"/>
    <property type="match status" value="1"/>
</dbReference>
<dbReference type="FunFam" id="3.60.20.10:FF:000077">
    <property type="entry name" value="Proteasome subunit alpha type-3"/>
    <property type="match status" value="1"/>
</dbReference>
<dbReference type="Gene3D" id="3.60.20.10">
    <property type="entry name" value="Glutamine Phosphoribosylpyrophosphate, subunit 1, domain 1"/>
    <property type="match status" value="1"/>
</dbReference>
<dbReference type="InterPro" id="IPR029055">
    <property type="entry name" value="Ntn_hydrolases_N"/>
</dbReference>
<dbReference type="InterPro" id="IPR050115">
    <property type="entry name" value="Proteasome_alpha"/>
</dbReference>
<dbReference type="InterPro" id="IPR023332">
    <property type="entry name" value="Proteasome_alpha-type"/>
</dbReference>
<dbReference type="InterPro" id="IPR000426">
    <property type="entry name" value="Proteasome_asu_N"/>
</dbReference>
<dbReference type="InterPro" id="IPR001353">
    <property type="entry name" value="Proteasome_sua/b"/>
</dbReference>
<dbReference type="PANTHER" id="PTHR11599">
    <property type="entry name" value="PROTEASOME SUBUNIT ALPHA/BETA"/>
    <property type="match status" value="1"/>
</dbReference>
<dbReference type="Pfam" id="PF00227">
    <property type="entry name" value="Proteasome"/>
    <property type="match status" value="1"/>
</dbReference>
<dbReference type="Pfam" id="PF10584">
    <property type="entry name" value="Proteasome_A_N"/>
    <property type="match status" value="1"/>
</dbReference>
<dbReference type="SMART" id="SM00948">
    <property type="entry name" value="Proteasome_A_N"/>
    <property type="match status" value="1"/>
</dbReference>
<dbReference type="SUPFAM" id="SSF56235">
    <property type="entry name" value="N-terminal nucleophile aminohydrolases (Ntn hydrolases)"/>
    <property type="match status" value="1"/>
</dbReference>
<dbReference type="PROSITE" id="PS00388">
    <property type="entry name" value="PROTEASOME_ALPHA_1"/>
    <property type="match status" value="1"/>
</dbReference>
<dbReference type="PROSITE" id="PS51475">
    <property type="entry name" value="PROTEASOME_ALPHA_2"/>
    <property type="match status" value="1"/>
</dbReference>
<feature type="initiator methionine" description="Removed" evidence="6">
    <location>
        <position position="1"/>
    </location>
</feature>
<feature type="chain" id="PRO_0000124092" description="Proteasome subunit alpha type-3">
    <location>
        <begin position="2"/>
        <end position="255"/>
    </location>
</feature>
<feature type="modified residue" description="N-acetylserine" evidence="4">
    <location>
        <position position="2"/>
    </location>
</feature>
<feature type="modified residue" description="N6-acetyllysine" evidence="12">
    <location>
        <position position="57"/>
    </location>
</feature>
<feature type="modified residue" description="N6-acetyllysine" evidence="1">
    <location>
        <position position="206"/>
    </location>
</feature>
<feature type="modified residue" description="N6-acetyllysine" evidence="1">
    <location>
        <position position="230"/>
    </location>
</feature>
<feature type="modified residue" description="Phosphoserine" evidence="1">
    <location>
        <position position="243"/>
    </location>
</feature>
<feature type="modified residue" description="Phosphoserine" evidence="7 8 9 10 11">
    <location>
        <position position="250"/>
    </location>
</feature>
<feature type="strand" evidence="13">
    <location>
        <begin position="5"/>
        <end position="10"/>
    </location>
</feature>
<feature type="helix" evidence="13">
    <location>
        <begin position="22"/>
        <end position="32"/>
    </location>
</feature>
<feature type="strand" evidence="13">
    <location>
        <begin position="37"/>
        <end position="42"/>
    </location>
</feature>
<feature type="strand" evidence="13">
    <location>
        <begin position="45"/>
        <end position="53"/>
    </location>
</feature>
<feature type="strand" evidence="13">
    <location>
        <begin position="67"/>
        <end position="71"/>
    </location>
</feature>
<feature type="strand" evidence="13">
    <location>
        <begin position="74"/>
        <end position="80"/>
    </location>
</feature>
<feature type="helix" evidence="13">
    <location>
        <begin position="82"/>
        <end position="103"/>
    </location>
</feature>
<feature type="helix" evidence="13">
    <location>
        <begin position="109"/>
        <end position="122"/>
    </location>
</feature>
<feature type="strand" evidence="13">
    <location>
        <begin position="125"/>
        <end position="129"/>
    </location>
</feature>
<feature type="strand" evidence="13">
    <location>
        <begin position="134"/>
        <end position="140"/>
    </location>
</feature>
<feature type="turn" evidence="13">
    <location>
        <begin position="143"/>
        <end position="145"/>
    </location>
</feature>
<feature type="strand" evidence="13">
    <location>
        <begin position="148"/>
        <end position="152"/>
    </location>
</feature>
<feature type="strand" evidence="13">
    <location>
        <begin position="158"/>
        <end position="167"/>
    </location>
</feature>
<feature type="helix" evidence="13">
    <location>
        <begin position="170"/>
        <end position="177"/>
    </location>
</feature>
<feature type="turn" evidence="14">
    <location>
        <begin position="182"/>
        <end position="184"/>
    </location>
</feature>
<feature type="helix" evidence="13">
    <location>
        <begin position="187"/>
        <end position="201"/>
    </location>
</feature>
<feature type="turn" evidence="13">
    <location>
        <begin position="204"/>
        <end position="206"/>
    </location>
</feature>
<feature type="strand" evidence="13">
    <location>
        <begin position="210"/>
        <end position="218"/>
    </location>
</feature>
<feature type="turn" evidence="13">
    <location>
        <begin position="219"/>
        <end position="223"/>
    </location>
</feature>
<feature type="helix" evidence="13">
    <location>
        <begin position="230"/>
        <end position="242"/>
    </location>
</feature>
<organism>
    <name type="scientific">Mus musculus</name>
    <name type="common">Mouse</name>
    <dbReference type="NCBI Taxonomy" id="10090"/>
    <lineage>
        <taxon>Eukaryota</taxon>
        <taxon>Metazoa</taxon>
        <taxon>Chordata</taxon>
        <taxon>Craniata</taxon>
        <taxon>Vertebrata</taxon>
        <taxon>Euteleostomi</taxon>
        <taxon>Mammalia</taxon>
        <taxon>Eutheria</taxon>
        <taxon>Euarchontoglires</taxon>
        <taxon>Glires</taxon>
        <taxon>Rodentia</taxon>
        <taxon>Myomorpha</taxon>
        <taxon>Muroidea</taxon>
        <taxon>Muridae</taxon>
        <taxon>Murinae</taxon>
        <taxon>Mus</taxon>
        <taxon>Mus</taxon>
    </lineage>
</organism>
<comment type="function">
    <text evidence="3 5">Component of the 20S core proteasome complex involved in the proteolytic degradation of most intracellular proteins. This complex plays numerous essential roles within the cell by associating with different regulatory particles. Associated with two 19S regulatory particles, forms the 26S proteasome and thus participates in the ATP-dependent degradation of ubiquitinated proteins. The 26S proteasome plays a key role in the maintenance of protein homeostasis by removing misfolded or damaged proteins that could impair cellular functions, and by removing proteins whose functions are no longer required. Associated with the PA200 or PA28, the 20S proteasome mediates ubiquitin-independent protein degradation. This type of proteolysis is required in several pathways including spermatogenesis (20S-PA200 complex) or generation of a subset of MHC class I-presented antigenic peptides (20S-PA28 complex). Binds to the C-terminus of CDKN1A and thereby mediates its degradation. Negatively regulates the membrane trafficking of the cell-surface thromboxane A2 receptor (TBXA2R) isoform 2.</text>
</comment>
<comment type="subunit">
    <text evidence="1 4 5">The 26S proteasome consists of a 20S proteasome core and two 19S regulatory subunits. The 20S proteasome core is a barrel-shaped complex made of 28 subunits that are arranged in four stacked rings. The two outer rings are each formed by seven alpha subunits, and the two inner rings are formed by seven beta subunits. The proteolytic activity is exerted by three beta-subunits PSMB5, PSMB6 and PSMB7 (PubMed:16857966, PubMed:22341445). Interacts with AURKB. Interacts with CDKN1A. Interacts with MDM2 and RB1. Interacts with the C-terminus of TBXA2R isoform 2. Interacts with DNAJB2.</text>
</comment>
<comment type="subcellular location">
    <subcellularLocation>
        <location evidence="1">Cytoplasm</location>
    </subcellularLocation>
    <subcellularLocation>
        <location evidence="1">Nucleus</location>
    </subcellularLocation>
    <text evidence="1">Translocated from the cytoplasm into the nucleus following interaction with AKIRIN2, which bridges the proteasome with the nuclear import receptor IPO9.</text>
</comment>
<comment type="tissue specificity">
    <text evidence="5">Detected in liver (at protein level).</text>
</comment>
<comment type="similarity">
    <text evidence="2">Belongs to the peptidase T1A family.</text>
</comment>
<evidence type="ECO:0000250" key="1">
    <source>
        <dbReference type="UniProtKB" id="P25788"/>
    </source>
</evidence>
<evidence type="ECO:0000255" key="2">
    <source>
        <dbReference type="PROSITE-ProRule" id="PRU00808"/>
    </source>
</evidence>
<evidence type="ECO:0000269" key="3">
    <source>
    </source>
</evidence>
<evidence type="ECO:0000269" key="4">
    <source>
    </source>
</evidence>
<evidence type="ECO:0000269" key="5">
    <source>
    </source>
</evidence>
<evidence type="ECO:0000305" key="6">
    <source>
    </source>
</evidence>
<evidence type="ECO:0007744" key="7">
    <source>
    </source>
</evidence>
<evidence type="ECO:0007744" key="8">
    <source>
    </source>
</evidence>
<evidence type="ECO:0007744" key="9">
    <source>
    </source>
</evidence>
<evidence type="ECO:0007744" key="10">
    <source>
    </source>
</evidence>
<evidence type="ECO:0007744" key="11">
    <source>
    </source>
</evidence>
<evidence type="ECO:0007744" key="12">
    <source>
    </source>
</evidence>
<evidence type="ECO:0007829" key="13">
    <source>
        <dbReference type="PDB" id="3UNB"/>
    </source>
</evidence>
<evidence type="ECO:0007829" key="14">
    <source>
        <dbReference type="PDB" id="3UNF"/>
    </source>
</evidence>
<name>PSA3_MOUSE</name>
<keyword id="KW-0002">3D-structure</keyword>
<keyword id="KW-0007">Acetylation</keyword>
<keyword id="KW-0963">Cytoplasm</keyword>
<keyword id="KW-0903">Direct protein sequencing</keyword>
<keyword id="KW-0539">Nucleus</keyword>
<keyword id="KW-0597">Phosphoprotein</keyword>
<keyword id="KW-0647">Proteasome</keyword>
<keyword id="KW-1185">Reference proteome</keyword>
<reference key="1">
    <citation type="submission" date="1998-03" db="EMBL/GenBank/DDBJ databases">
        <authorList>
            <person name="Gao Y."/>
            <person name="Simons M."/>
        </authorList>
    </citation>
    <scope>NUCLEOTIDE SEQUENCE [MRNA]</scope>
</reference>
<reference key="2">
    <citation type="journal article" date="1999" name="Immunogenetics">
        <title>The complete primary structure of mouse 20S proteasomes.</title>
        <authorList>
            <person name="Elenich L.A."/>
            <person name="Nandi D."/>
            <person name="Kent E.A."/>
            <person name="McCluskey T.S."/>
            <person name="Cruz M."/>
            <person name="Iyer M.N."/>
            <person name="Woodward E.C."/>
            <person name="Conn C.W."/>
            <person name="Ochoa A.L."/>
            <person name="Ginsburg D.B."/>
            <person name="Monaco J.J."/>
        </authorList>
    </citation>
    <scope>NUCLEOTIDE SEQUENCE [MRNA]</scope>
    <source>
        <strain>BALB/cJ</strain>
    </source>
</reference>
<reference key="3">
    <citation type="submission" date="2007-07" db="UniProtKB">
        <authorList>
            <person name="Lubec G."/>
            <person name="Yang J.W."/>
            <person name="Zigmond M."/>
        </authorList>
    </citation>
    <scope>PROTEIN SEQUENCE OF 73-86</scope>
    <source>
        <tissue>Brain</tissue>
    </source>
</reference>
<reference key="4">
    <citation type="journal article" date="2006" name="Circ. Res.">
        <title>Mapping the murine cardiac 26S proteasome complexes.</title>
        <authorList>
            <person name="Gomes A.V."/>
            <person name="Zong C."/>
            <person name="Edmondson R.D."/>
            <person name="Li X."/>
            <person name="Stefani E."/>
            <person name="Zhang J."/>
            <person name="Jones R.C."/>
            <person name="Thyparambil S."/>
            <person name="Wang G.W."/>
            <person name="Qiao X."/>
            <person name="Bardag-Gorce F."/>
            <person name="Ping P."/>
        </authorList>
    </citation>
    <scope>IDENTIFICATION IN THE 20S PROTEASOME CORE COMPLEX</scope>
    <scope>ACETYLATION AT SER-2</scope>
</reference>
<reference key="5">
    <citation type="journal article" date="2006" name="Mol. Cell. Biol.">
        <title>Proteasome activator PA200 is required for normal spermatogenesis.</title>
        <authorList>
            <person name="Khor B."/>
            <person name="Bredemeyer A.L."/>
            <person name="Huang C.-Y."/>
            <person name="Turnbull I.R."/>
            <person name="Evans R."/>
            <person name="Maggi L.B. Jr."/>
            <person name="White J.M."/>
            <person name="Walker L.M."/>
            <person name="Carnes K."/>
            <person name="Hess R.A."/>
            <person name="Sleckman B.P."/>
        </authorList>
    </citation>
    <scope>FUNCTION</scope>
</reference>
<reference key="6">
    <citation type="journal article" date="2007" name="Proc. Natl. Acad. Sci. U.S.A.">
        <title>Large-scale phosphorylation analysis of mouse liver.</title>
        <authorList>
            <person name="Villen J."/>
            <person name="Beausoleil S.A."/>
            <person name="Gerber S.A."/>
            <person name="Gygi S.P."/>
        </authorList>
    </citation>
    <scope>PHOSPHORYLATION [LARGE SCALE ANALYSIS] AT SER-250</scope>
    <scope>IDENTIFICATION BY MASS SPECTROMETRY [LARGE SCALE ANALYSIS]</scope>
    <source>
        <tissue>Liver</tissue>
    </source>
</reference>
<reference key="7">
    <citation type="journal article" date="2008" name="J. Proteome Res.">
        <title>Specific phosphopeptide enrichment with immobilized titanium ion affinity chromatography adsorbent for phosphoproteome analysis.</title>
        <authorList>
            <person name="Zhou H."/>
            <person name="Ye M."/>
            <person name="Dong J."/>
            <person name="Han G."/>
            <person name="Jiang X."/>
            <person name="Wu R."/>
            <person name="Zou H."/>
        </authorList>
    </citation>
    <scope>PHOSPHORYLATION [LARGE SCALE ANALYSIS] AT SER-250</scope>
    <scope>IDENTIFICATION BY MASS SPECTROMETRY [LARGE SCALE ANALYSIS]</scope>
    <source>
        <tissue>Liver</tissue>
    </source>
</reference>
<reference key="8">
    <citation type="journal article" date="2009" name="Immunity">
        <title>The phagosomal proteome in interferon-gamma-activated macrophages.</title>
        <authorList>
            <person name="Trost M."/>
            <person name="English L."/>
            <person name="Lemieux S."/>
            <person name="Courcelles M."/>
            <person name="Desjardins M."/>
            <person name="Thibault P."/>
        </authorList>
    </citation>
    <scope>PHOSPHORYLATION [LARGE SCALE ANALYSIS] AT SER-250</scope>
    <scope>IDENTIFICATION BY MASS SPECTROMETRY [LARGE SCALE ANALYSIS]</scope>
</reference>
<reference key="9">
    <citation type="journal article" date="2009" name="Mol. Cell. Proteomics">
        <title>Large scale localization of protein phosphorylation by use of electron capture dissociation mass spectrometry.</title>
        <authorList>
            <person name="Sweet S.M."/>
            <person name="Bailey C.M."/>
            <person name="Cunningham D.L."/>
            <person name="Heath J.K."/>
            <person name="Cooper H.J."/>
        </authorList>
    </citation>
    <scope>PHOSPHORYLATION [LARGE SCALE ANALYSIS] AT SER-250</scope>
    <scope>IDENTIFICATION BY MASS SPECTROMETRY [LARGE SCALE ANALYSIS]</scope>
    <source>
        <tissue>Embryonic fibroblast</tissue>
    </source>
</reference>
<reference key="10">
    <citation type="journal article" date="2010" name="Cell">
        <title>A tissue-specific atlas of mouse protein phosphorylation and expression.</title>
        <authorList>
            <person name="Huttlin E.L."/>
            <person name="Jedrychowski M.P."/>
            <person name="Elias J.E."/>
            <person name="Goswami T."/>
            <person name="Rad R."/>
            <person name="Beausoleil S.A."/>
            <person name="Villen J."/>
            <person name="Haas W."/>
            <person name="Sowa M.E."/>
            <person name="Gygi S.P."/>
        </authorList>
    </citation>
    <scope>PHOSPHORYLATION [LARGE SCALE ANALYSIS] AT SER-250</scope>
    <scope>IDENTIFICATION BY MASS SPECTROMETRY [LARGE SCALE ANALYSIS]</scope>
    <source>
        <tissue>Brain</tissue>
        <tissue>Brown adipose tissue</tissue>
        <tissue>Heart</tissue>
        <tissue>Kidney</tissue>
        <tissue>Liver</tissue>
        <tissue>Lung</tissue>
        <tissue>Pancreas</tissue>
        <tissue>Spleen</tissue>
        <tissue>Testis</tissue>
    </source>
</reference>
<reference key="11">
    <citation type="journal article" date="2013" name="Mol. Cell">
        <title>SIRT5-mediated lysine desuccinylation impacts diverse metabolic pathways.</title>
        <authorList>
            <person name="Park J."/>
            <person name="Chen Y."/>
            <person name="Tishkoff D.X."/>
            <person name="Peng C."/>
            <person name="Tan M."/>
            <person name="Dai L."/>
            <person name="Xie Z."/>
            <person name="Zhang Y."/>
            <person name="Zwaans B.M."/>
            <person name="Skinner M.E."/>
            <person name="Lombard D.B."/>
            <person name="Zhao Y."/>
        </authorList>
    </citation>
    <scope>ACETYLATION [LARGE SCALE ANALYSIS] AT LYS-57</scope>
    <scope>IDENTIFICATION BY MASS SPECTROMETRY [LARGE SCALE ANALYSIS]</scope>
    <source>
        <tissue>Embryonic fibroblast</tissue>
    </source>
</reference>
<reference key="12">
    <citation type="journal article" date="2012" name="Cell">
        <title>Immuno- and constitutive proteasome crystal structures reveal differences in substrate and inhibitor specificity.</title>
        <authorList>
            <person name="Huber E.M."/>
            <person name="Basler M."/>
            <person name="Schwab R."/>
            <person name="Heinemeyer W."/>
            <person name="Kirk C.J."/>
            <person name="Groettrup M."/>
            <person name="Groll M."/>
        </authorList>
    </citation>
    <scope>X-RAY CRYSTALLOGRAPHY (2.90 ANGSTROMS) OF 20S IMMUNOPROTEASOME</scope>
    <scope>SUBUNIT</scope>
    <scope>FUNCTION</scope>
    <scope>TISSUE SPECIFICITY</scope>
</reference>
<protein>
    <recommendedName>
        <fullName>Proteasome subunit alpha type-3</fullName>
    </recommendedName>
    <alternativeName>
        <fullName>Macropain subunit C8</fullName>
    </alternativeName>
    <alternativeName>
        <fullName>Multicatalytic endopeptidase complex subunit C8</fullName>
    </alternativeName>
    <alternativeName>
        <fullName>Proteasome component C8</fullName>
    </alternativeName>
    <alternativeName>
        <fullName>Proteasome subunit K</fullName>
    </alternativeName>
    <alternativeName>
        <fullName>Proteasome subunit alpha-7</fullName>
        <shortName>alpha-7</shortName>
    </alternativeName>
</protein>
<sequence>MSSIGTGYDLSASTFSPDGRVFQVEYAMKAVENSSTAIGIRCKDGVVFGVEKLVLSKLYEEGSNKRLFNVDRHVGMAVAGLLADARSLADIAREEASNFRSNFGYNIPLKHLADRVAMYVHAYTLYSAVRPFGCSFMLGSYSANDGAQLYMIDPSGVSYGYWGCAIGKARQAAKTEIEKLQMKEMTCRDVVKEVAKIIYIVHDEVKDKAFELELSWVGELTKGRHEIVPKDIREEAEKYAKESLKEEDESDDDNM</sequence>
<proteinExistence type="evidence at protein level"/>
<gene>
    <name type="primary">Psma3</name>
</gene>